<evidence type="ECO:0000255" key="1">
    <source>
        <dbReference type="HAMAP-Rule" id="MF_00234"/>
    </source>
</evidence>
<comment type="catalytic activity">
    <reaction evidence="1">
        <text>AMP + ATP = 2 ADP</text>
        <dbReference type="Rhea" id="RHEA:12973"/>
        <dbReference type="ChEBI" id="CHEBI:30616"/>
        <dbReference type="ChEBI" id="CHEBI:456215"/>
        <dbReference type="ChEBI" id="CHEBI:456216"/>
        <dbReference type="EC" id="2.7.4.3"/>
    </reaction>
</comment>
<comment type="subunit">
    <text evidence="1">Monomer.</text>
</comment>
<comment type="subcellular location">
    <subcellularLocation>
        <location evidence="1">Cytoplasm</location>
    </subcellularLocation>
</comment>
<comment type="similarity">
    <text evidence="1">Belongs to the archaeal adenylate kinase family.</text>
</comment>
<dbReference type="EC" id="2.7.4.3" evidence="1"/>
<dbReference type="EMBL" id="CP000745">
    <property type="protein sequence ID" value="ABR65355.1"/>
    <property type="molecule type" value="Genomic_DNA"/>
</dbReference>
<dbReference type="SMR" id="A6VFX9"/>
<dbReference type="STRING" id="426368.MmarC7_0285"/>
<dbReference type="KEGG" id="mmz:MmarC7_0285"/>
<dbReference type="eggNOG" id="arCOG01039">
    <property type="taxonomic scope" value="Archaea"/>
</dbReference>
<dbReference type="HOGENOM" id="CLU_119371_0_0_2"/>
<dbReference type="OrthoDB" id="26198at2157"/>
<dbReference type="GO" id="GO:0005737">
    <property type="term" value="C:cytoplasm"/>
    <property type="evidence" value="ECO:0007669"/>
    <property type="project" value="UniProtKB-SubCell"/>
</dbReference>
<dbReference type="GO" id="GO:0004017">
    <property type="term" value="F:adenylate kinase activity"/>
    <property type="evidence" value="ECO:0007669"/>
    <property type="project" value="UniProtKB-UniRule"/>
</dbReference>
<dbReference type="GO" id="GO:0005524">
    <property type="term" value="F:ATP binding"/>
    <property type="evidence" value="ECO:0007669"/>
    <property type="project" value="UniProtKB-UniRule"/>
</dbReference>
<dbReference type="Gene3D" id="3.40.50.300">
    <property type="entry name" value="P-loop containing nucleotide triphosphate hydrolases"/>
    <property type="match status" value="1"/>
</dbReference>
<dbReference type="HAMAP" id="MF_00234">
    <property type="entry name" value="Adenylate_kinase_AdkA"/>
    <property type="match status" value="1"/>
</dbReference>
<dbReference type="InterPro" id="IPR023477">
    <property type="entry name" value="Adenylate_kinase_AdkA"/>
</dbReference>
<dbReference type="InterPro" id="IPR027417">
    <property type="entry name" value="P-loop_NTPase"/>
</dbReference>
<dbReference type="NCBIfam" id="NF003122">
    <property type="entry name" value="PRK04040.1"/>
    <property type="match status" value="1"/>
</dbReference>
<dbReference type="Pfam" id="PF13207">
    <property type="entry name" value="AAA_17"/>
    <property type="match status" value="1"/>
</dbReference>
<dbReference type="SUPFAM" id="SSF52540">
    <property type="entry name" value="P-loop containing nucleoside triphosphate hydrolases"/>
    <property type="match status" value="1"/>
</dbReference>
<organism>
    <name type="scientific">Methanococcus maripaludis (strain C7 / ATCC BAA-1331)</name>
    <dbReference type="NCBI Taxonomy" id="426368"/>
    <lineage>
        <taxon>Archaea</taxon>
        <taxon>Methanobacteriati</taxon>
        <taxon>Methanobacteriota</taxon>
        <taxon>Methanomada group</taxon>
        <taxon>Methanococci</taxon>
        <taxon>Methanococcales</taxon>
        <taxon>Methanococcaceae</taxon>
        <taxon>Methanococcus</taxon>
    </lineage>
</organism>
<feature type="chain" id="PRO_1000021701" description="Adenylate kinase">
    <location>
        <begin position="1"/>
        <end position="192"/>
    </location>
</feature>
<feature type="binding site" evidence="1">
    <location>
        <begin position="10"/>
        <end position="18"/>
    </location>
    <ligand>
        <name>ATP</name>
        <dbReference type="ChEBI" id="CHEBI:30616"/>
    </ligand>
</feature>
<accession>A6VFX9</accession>
<reference key="1">
    <citation type="submission" date="2007-06" db="EMBL/GenBank/DDBJ databases">
        <title>Complete sequence of Methanococcus maripaludis C7.</title>
        <authorList>
            <consortium name="US DOE Joint Genome Institute"/>
            <person name="Copeland A."/>
            <person name="Lucas S."/>
            <person name="Lapidus A."/>
            <person name="Barry K."/>
            <person name="Glavina del Rio T."/>
            <person name="Dalin E."/>
            <person name="Tice H."/>
            <person name="Pitluck S."/>
            <person name="Clum A."/>
            <person name="Schmutz J."/>
            <person name="Larimer F."/>
            <person name="Land M."/>
            <person name="Hauser L."/>
            <person name="Kyrpides N."/>
            <person name="Anderson I."/>
            <person name="Sieprawska-Lupa M."/>
            <person name="Whitman W.B."/>
            <person name="Richardson P."/>
        </authorList>
    </citation>
    <scope>NUCLEOTIDE SEQUENCE [LARGE SCALE GENOMIC DNA]</scope>
    <source>
        <strain>C7 / ATCC BAA-1331</strain>
    </source>
</reference>
<keyword id="KW-0067">ATP-binding</keyword>
<keyword id="KW-0963">Cytoplasm</keyword>
<keyword id="KW-0418">Kinase</keyword>
<keyword id="KW-0547">Nucleotide-binding</keyword>
<keyword id="KW-0808">Transferase</keyword>
<protein>
    <recommendedName>
        <fullName evidence="1">Adenylate kinase</fullName>
        <shortName evidence="1">AK</shortName>
        <ecNumber evidence="1">2.7.4.3</ecNumber>
    </recommendedName>
    <alternativeName>
        <fullName evidence="1">ATP-AMP transphosphorylase</fullName>
    </alternativeName>
</protein>
<proteinExistence type="inferred from homology"/>
<gene>
    <name evidence="1" type="primary">adkA</name>
    <name type="ordered locus">MmarC7_0285</name>
</gene>
<name>KADA_METM7</name>
<sequence>MKNKVVVVTGVPGVGGTTVTQKAMDILSEEGLNYKMVNFGSAMFEVANEEGLASDRDQMRKLDPETQKRIQKMAGRKIAEMAKEYPVAVDTHSTVKTPKGYLPGLPAWVLTELNPDMVIVVETDGDEILMRRLSDESRKRDLETTASIEEHQFMNRAAAMSYGVLTGATVKIVKNKNGLVDNAVEELISVLR</sequence>